<accession>P44711</accession>
<evidence type="ECO:0000255" key="1">
    <source>
        <dbReference type="HAMAP-Rule" id="MF_00274"/>
    </source>
</evidence>
<evidence type="ECO:0000269" key="2">
    <source>
    </source>
</evidence>
<evidence type="ECO:0000269" key="3">
    <source>
    </source>
</evidence>
<evidence type="ECO:0000305" key="4"/>
<evidence type="ECO:0007829" key="5">
    <source>
        <dbReference type="PDB" id="1J8B"/>
    </source>
</evidence>
<reference key="1">
    <citation type="journal article" date="1995" name="Science">
        <title>Whole-genome random sequencing and assembly of Haemophilus influenzae Rd.</title>
        <authorList>
            <person name="Fleischmann R.D."/>
            <person name="Adams M.D."/>
            <person name="White O."/>
            <person name="Clayton R.A."/>
            <person name="Kirkness E.F."/>
            <person name="Kerlavage A.R."/>
            <person name="Bult C.J."/>
            <person name="Tomb J.-F."/>
            <person name="Dougherty B.A."/>
            <person name="Merrick J.M."/>
            <person name="McKenney K."/>
            <person name="Sutton G.G."/>
            <person name="FitzHugh W."/>
            <person name="Fields C.A."/>
            <person name="Gocayne J.D."/>
            <person name="Scott J.D."/>
            <person name="Shirley R."/>
            <person name="Liu L.-I."/>
            <person name="Glodek A."/>
            <person name="Kelley J.M."/>
            <person name="Weidman J.F."/>
            <person name="Phillips C.A."/>
            <person name="Spriggs T."/>
            <person name="Hedblom E."/>
            <person name="Cotton M.D."/>
            <person name="Utterback T.R."/>
            <person name="Hanna M.C."/>
            <person name="Nguyen D.T."/>
            <person name="Saudek D.M."/>
            <person name="Brandon R.C."/>
            <person name="Fine L.D."/>
            <person name="Fritchman J.L."/>
            <person name="Fuhrmann J.L."/>
            <person name="Geoghagen N.S.M."/>
            <person name="Gnehm C.L."/>
            <person name="McDonald L.A."/>
            <person name="Small K.V."/>
            <person name="Fraser C.M."/>
            <person name="Smith H.O."/>
            <person name="Venter J.C."/>
        </authorList>
    </citation>
    <scope>NUCLEOTIDE SEQUENCE [LARGE SCALE GENOMIC DNA]</scope>
    <source>
        <strain>ATCC 51907 / DSM 11121 / KW20 / Rd</strain>
    </source>
</reference>
<reference key="2">
    <citation type="journal article" date="2000" name="Electrophoresis">
        <title>Two-dimensional map of the proteome of Haemophilus influenzae.</title>
        <authorList>
            <person name="Langen H."/>
            <person name="Takacs B."/>
            <person name="Evers S."/>
            <person name="Berndt P."/>
            <person name="Lahm H.W."/>
            <person name="Wipf B."/>
            <person name="Gray C."/>
            <person name="Fountoulakis M."/>
        </authorList>
    </citation>
    <scope>IDENTIFICATION BY MASS SPECTROMETRY</scope>
    <source>
        <strain>ATCC 51907 / DSM 11121 / KW20 / Rd</strain>
    </source>
</reference>
<reference key="3">
    <citation type="journal article" date="2009" name="BMC Microbiol.">
        <title>DNA-binding by Haemophilus influenzae and Escherichia coli YbaB, members of a widely-distributed bacterial protein family.</title>
        <authorList>
            <person name="Cooley A.E."/>
            <person name="Riley S.P."/>
            <person name="Kral K."/>
            <person name="Miller M.C."/>
            <person name="DeMoll E."/>
            <person name="Fried M.G."/>
            <person name="Stevenson B."/>
        </authorList>
    </citation>
    <scope>DNA-BINDING</scope>
    <scope>SUBUNIT</scope>
</reference>
<reference key="4">
    <citation type="journal article" date="2003" name="Proteins">
        <title>Crystal structure of YbaB from Haemophilus influenzae (HI0442), a protein of unknown function coexpressed with the recombinational DNA repair protein RecR.</title>
        <authorList>
            <person name="Lim K."/>
            <person name="Tempczyk A."/>
            <person name="Parsons J.F."/>
            <person name="Bonander N."/>
            <person name="Toedt J."/>
            <person name="Kelman Z."/>
            <person name="Howard A."/>
            <person name="Eisenstein E."/>
            <person name="Herzberg O."/>
        </authorList>
    </citation>
    <scope>X-RAY CRYSTALLOGRAPHY (1.75 ANGSTROMS)</scope>
    <scope>SUBUNIT</scope>
</reference>
<proteinExistence type="evidence at protein level"/>
<organism>
    <name type="scientific">Haemophilus influenzae (strain ATCC 51907 / DSM 11121 / KW20 / Rd)</name>
    <dbReference type="NCBI Taxonomy" id="71421"/>
    <lineage>
        <taxon>Bacteria</taxon>
        <taxon>Pseudomonadati</taxon>
        <taxon>Pseudomonadota</taxon>
        <taxon>Gammaproteobacteria</taxon>
        <taxon>Pasteurellales</taxon>
        <taxon>Pasteurellaceae</taxon>
        <taxon>Haemophilus</taxon>
    </lineage>
</organism>
<comment type="function">
    <text evidence="1">Binds to DNA and alters its conformation. May be involved in regulation of gene expression, nucleoid organization and DNA protection.</text>
</comment>
<comment type="subunit">
    <text evidence="1 2 3">Homodimer.</text>
</comment>
<comment type="subcellular location">
    <subcellularLocation>
        <location evidence="1">Cytoplasm</location>
        <location evidence="1">Nucleoid</location>
    </subcellularLocation>
</comment>
<comment type="similarity">
    <text evidence="1">Belongs to the YbaB/EbfC family.</text>
</comment>
<comment type="sequence caution" evidence="4">
    <conflict type="erroneous initiation">
        <sequence resource="EMBL-CDS" id="AAC22101"/>
    </conflict>
</comment>
<protein>
    <recommendedName>
        <fullName evidence="1">Nucleoid-associated protein HI_0442</fullName>
    </recommendedName>
</protein>
<keyword id="KW-0002">3D-structure</keyword>
<keyword id="KW-0963">Cytoplasm</keyword>
<keyword id="KW-0238">DNA-binding</keyword>
<keyword id="KW-1185">Reference proteome</keyword>
<sequence>MFGKGGLGGLMKQAQQMQEKMQKMQEEIAQLEVTGESGAGLVKITINGAHNCRRIDIDPSLMEDDKEMLEDLIAAAFNDAVRRAEELQKEKMASVTAGMPLPPGMKFPF</sequence>
<name>Y442_HAEIN</name>
<feature type="chain" id="PRO_0000170397" description="Nucleoid-associated protein HI_0442">
    <location>
        <begin position="1"/>
        <end position="109"/>
    </location>
</feature>
<feature type="helix" evidence="5">
    <location>
        <begin position="10"/>
        <end position="28"/>
    </location>
</feature>
<feature type="strand" evidence="5">
    <location>
        <begin position="31"/>
        <end position="37"/>
    </location>
</feature>
<feature type="turn" evidence="5">
    <location>
        <begin position="38"/>
        <end position="41"/>
    </location>
</feature>
<feature type="strand" evidence="5">
    <location>
        <begin position="42"/>
        <end position="47"/>
    </location>
</feature>
<feature type="strand" evidence="5">
    <location>
        <begin position="52"/>
        <end position="57"/>
    </location>
</feature>
<feature type="helix" evidence="5">
    <location>
        <begin position="59"/>
        <end position="63"/>
    </location>
</feature>
<feature type="helix" evidence="5">
    <location>
        <begin position="66"/>
        <end position="95"/>
    </location>
</feature>
<dbReference type="EMBL" id="L42023">
    <property type="protein sequence ID" value="AAC22101.1"/>
    <property type="status" value="ALT_INIT"/>
    <property type="molecule type" value="Genomic_DNA"/>
</dbReference>
<dbReference type="PIR" id="G64152">
    <property type="entry name" value="G64152"/>
</dbReference>
<dbReference type="RefSeq" id="NP_438603.2">
    <property type="nucleotide sequence ID" value="NC_000907.1"/>
</dbReference>
<dbReference type="PDB" id="1J8B">
    <property type="method" value="X-ray"/>
    <property type="resolution" value="1.75 A"/>
    <property type="chains" value="A=1-109"/>
</dbReference>
<dbReference type="PDBsum" id="1J8B"/>
<dbReference type="SMR" id="P44711"/>
<dbReference type="STRING" id="71421.HI_0442"/>
<dbReference type="EnsemblBacteria" id="AAC22101">
    <property type="protein sequence ID" value="AAC22101"/>
    <property type="gene ID" value="HI_0442"/>
</dbReference>
<dbReference type="KEGG" id="hin:HI_0442"/>
<dbReference type="PATRIC" id="fig|71421.8.peg.462"/>
<dbReference type="eggNOG" id="COG0718">
    <property type="taxonomic scope" value="Bacteria"/>
</dbReference>
<dbReference type="HOGENOM" id="CLU_140930_0_0_6"/>
<dbReference type="OrthoDB" id="9808738at2"/>
<dbReference type="PhylomeDB" id="P44711"/>
<dbReference type="BioCyc" id="HINF71421:G1GJ1-457-MONOMER"/>
<dbReference type="EvolutionaryTrace" id="P44711"/>
<dbReference type="Proteomes" id="UP000000579">
    <property type="component" value="Chromosome"/>
</dbReference>
<dbReference type="GO" id="GO:0043590">
    <property type="term" value="C:bacterial nucleoid"/>
    <property type="evidence" value="ECO:0007669"/>
    <property type="project" value="UniProtKB-UniRule"/>
</dbReference>
<dbReference type="GO" id="GO:0005829">
    <property type="term" value="C:cytosol"/>
    <property type="evidence" value="ECO:0000318"/>
    <property type="project" value="GO_Central"/>
</dbReference>
<dbReference type="GO" id="GO:0003677">
    <property type="term" value="F:DNA binding"/>
    <property type="evidence" value="ECO:0000318"/>
    <property type="project" value="GO_Central"/>
</dbReference>
<dbReference type="FunFam" id="3.30.1310.10:FF:000001">
    <property type="entry name" value="Nucleoid-associated protein YbaB"/>
    <property type="match status" value="1"/>
</dbReference>
<dbReference type="Gene3D" id="3.30.1310.10">
    <property type="entry name" value="Nucleoid-associated protein YbaB-like domain"/>
    <property type="match status" value="1"/>
</dbReference>
<dbReference type="HAMAP" id="MF_00274">
    <property type="entry name" value="DNA_YbaB_EbfC"/>
    <property type="match status" value="1"/>
</dbReference>
<dbReference type="InterPro" id="IPR036894">
    <property type="entry name" value="YbaB-like_sf"/>
</dbReference>
<dbReference type="InterPro" id="IPR004401">
    <property type="entry name" value="YbaB/EbfC"/>
</dbReference>
<dbReference type="NCBIfam" id="TIGR00103">
    <property type="entry name" value="DNA_YbaB_EbfC"/>
    <property type="match status" value="1"/>
</dbReference>
<dbReference type="PANTHER" id="PTHR33449">
    <property type="entry name" value="NUCLEOID-ASSOCIATED PROTEIN YBAB"/>
    <property type="match status" value="1"/>
</dbReference>
<dbReference type="PANTHER" id="PTHR33449:SF1">
    <property type="entry name" value="NUCLEOID-ASSOCIATED PROTEIN YBAB"/>
    <property type="match status" value="1"/>
</dbReference>
<dbReference type="Pfam" id="PF02575">
    <property type="entry name" value="YbaB_DNA_bd"/>
    <property type="match status" value="1"/>
</dbReference>
<dbReference type="PIRSF" id="PIRSF004555">
    <property type="entry name" value="UCP004555"/>
    <property type="match status" value="1"/>
</dbReference>
<dbReference type="SUPFAM" id="SSF82607">
    <property type="entry name" value="YbaB-like"/>
    <property type="match status" value="1"/>
</dbReference>
<gene>
    <name type="ordered locus">HI_0442</name>
</gene>